<reference key="1">
    <citation type="journal article" date="2006" name="Proc. Natl. Acad. Sci. U.S.A.">
        <title>The partitioned Rhizobium etli genome: genetic and metabolic redundancy in seven interacting replicons.</title>
        <authorList>
            <person name="Gonzalez V."/>
            <person name="Santamaria R.I."/>
            <person name="Bustos P."/>
            <person name="Hernandez-Gonzalez I."/>
            <person name="Medrano-Soto A."/>
            <person name="Moreno-Hagelsieb G."/>
            <person name="Janga S.C."/>
            <person name="Ramirez M.A."/>
            <person name="Jimenez-Jacinto V."/>
            <person name="Collado-Vides J."/>
            <person name="Davila G."/>
        </authorList>
    </citation>
    <scope>NUCLEOTIDE SEQUENCE [LARGE SCALE GENOMIC DNA]</scope>
    <source>
        <strain>ATCC 51251 / DSM 11541 / JCM 21823 / NBRC 15573 / CFN 42</strain>
    </source>
</reference>
<evidence type="ECO:0000255" key="1">
    <source>
        <dbReference type="HAMAP-Rule" id="MF_00197"/>
    </source>
</evidence>
<protein>
    <recommendedName>
        <fullName evidence="1">Diaminopimelate epimerase</fullName>
        <shortName evidence="1">DAP epimerase</shortName>
        <ecNumber evidence="1">5.1.1.7</ecNumber>
    </recommendedName>
    <alternativeName>
        <fullName evidence="1">PLP-independent amino acid racemase</fullName>
    </alternativeName>
</protein>
<accession>Q2K386</accession>
<feature type="chain" id="PRO_1000011944" description="Diaminopimelate epimerase">
    <location>
        <begin position="1"/>
        <end position="301"/>
    </location>
</feature>
<feature type="active site" description="Proton donor" evidence="1">
    <location>
        <position position="76"/>
    </location>
</feature>
<feature type="active site" description="Proton acceptor" evidence="1">
    <location>
        <position position="224"/>
    </location>
</feature>
<feature type="binding site" evidence="1">
    <location>
        <position position="15"/>
    </location>
    <ligand>
        <name>substrate</name>
    </ligand>
</feature>
<feature type="binding site" evidence="1">
    <location>
        <position position="47"/>
    </location>
    <ligand>
        <name>substrate</name>
    </ligand>
</feature>
<feature type="binding site" evidence="1">
    <location>
        <position position="67"/>
    </location>
    <ligand>
        <name>substrate</name>
    </ligand>
</feature>
<feature type="binding site" evidence="1">
    <location>
        <begin position="77"/>
        <end position="78"/>
    </location>
    <ligand>
        <name>substrate</name>
    </ligand>
</feature>
<feature type="binding site" evidence="1">
    <location>
        <position position="163"/>
    </location>
    <ligand>
        <name>substrate</name>
    </ligand>
</feature>
<feature type="binding site" evidence="1">
    <location>
        <position position="197"/>
    </location>
    <ligand>
        <name>substrate</name>
    </ligand>
</feature>
<feature type="binding site" evidence="1">
    <location>
        <begin position="215"/>
        <end position="216"/>
    </location>
    <ligand>
        <name>substrate</name>
    </ligand>
</feature>
<feature type="binding site" evidence="1">
    <location>
        <begin position="225"/>
        <end position="226"/>
    </location>
    <ligand>
        <name>substrate</name>
    </ligand>
</feature>
<feature type="site" description="Could be important to modulate the pK values of the two catalytic cysteine residues" evidence="1">
    <location>
        <position position="165"/>
    </location>
</feature>
<feature type="site" description="Could be important to modulate the pK values of the two catalytic cysteine residues" evidence="1">
    <location>
        <position position="215"/>
    </location>
</feature>
<gene>
    <name evidence="1" type="primary">dapF</name>
    <name type="ordered locus">RHE_CH03955</name>
</gene>
<sequence>MSATVEFARMNGLGNKILVVDMRGRSDKVTPAAAVALNADPQTEFDQIMAIHDPKADGTDAFIDILNSDGSKAQACGNGTRCVVQALAAETGRKAFTFQTVAGILNAIEHEDGTISVDMGKPVFDWDRIPLAEEFHDTSRIELQIGPIDNPLLHSPSAMSMGNPHAIFWVDKDVMSYDLARFGPLLENHPMFPERANITLAQVTSPTTMTTRTWERGAGLTLACGSAACSAAVSAARTGRTGRKVKINVASAKPPAMLSIEWRERDDHVIMTGPAEWEWSGRLDPATGCWSRDDAREVEAQ</sequence>
<keyword id="KW-0028">Amino-acid biosynthesis</keyword>
<keyword id="KW-0963">Cytoplasm</keyword>
<keyword id="KW-0413">Isomerase</keyword>
<keyword id="KW-0457">Lysine biosynthesis</keyword>
<keyword id="KW-1185">Reference proteome</keyword>
<name>DAPF_RHIEC</name>
<organism>
    <name type="scientific">Rhizobium etli (strain ATCC 51251 / DSM 11541 / JCM 21823 / NBRC 15573 / CFN 42)</name>
    <dbReference type="NCBI Taxonomy" id="347834"/>
    <lineage>
        <taxon>Bacteria</taxon>
        <taxon>Pseudomonadati</taxon>
        <taxon>Pseudomonadota</taxon>
        <taxon>Alphaproteobacteria</taxon>
        <taxon>Hyphomicrobiales</taxon>
        <taxon>Rhizobiaceae</taxon>
        <taxon>Rhizobium/Agrobacterium group</taxon>
        <taxon>Rhizobium</taxon>
    </lineage>
</organism>
<proteinExistence type="inferred from homology"/>
<dbReference type="EC" id="5.1.1.7" evidence="1"/>
<dbReference type="EMBL" id="CP000133">
    <property type="protein sequence ID" value="ABC92700.1"/>
    <property type="molecule type" value="Genomic_DNA"/>
</dbReference>
<dbReference type="RefSeq" id="WP_011427146.1">
    <property type="nucleotide sequence ID" value="NC_007761.1"/>
</dbReference>
<dbReference type="SMR" id="Q2K386"/>
<dbReference type="KEGG" id="ret:RHE_CH03955"/>
<dbReference type="eggNOG" id="COG0253">
    <property type="taxonomic scope" value="Bacteria"/>
</dbReference>
<dbReference type="HOGENOM" id="CLU_053306_1_0_5"/>
<dbReference type="OrthoDB" id="9805408at2"/>
<dbReference type="UniPathway" id="UPA00034">
    <property type="reaction ID" value="UER00025"/>
</dbReference>
<dbReference type="Proteomes" id="UP000001936">
    <property type="component" value="Chromosome"/>
</dbReference>
<dbReference type="GO" id="GO:0005829">
    <property type="term" value="C:cytosol"/>
    <property type="evidence" value="ECO:0007669"/>
    <property type="project" value="TreeGrafter"/>
</dbReference>
<dbReference type="GO" id="GO:0008837">
    <property type="term" value="F:diaminopimelate epimerase activity"/>
    <property type="evidence" value="ECO:0007669"/>
    <property type="project" value="UniProtKB-UniRule"/>
</dbReference>
<dbReference type="GO" id="GO:0009089">
    <property type="term" value="P:lysine biosynthetic process via diaminopimelate"/>
    <property type="evidence" value="ECO:0007669"/>
    <property type="project" value="UniProtKB-UniRule"/>
</dbReference>
<dbReference type="Gene3D" id="3.10.310.10">
    <property type="entry name" value="Diaminopimelate Epimerase, Chain A, domain 1"/>
    <property type="match status" value="2"/>
</dbReference>
<dbReference type="HAMAP" id="MF_00197">
    <property type="entry name" value="DAP_epimerase"/>
    <property type="match status" value="1"/>
</dbReference>
<dbReference type="InterPro" id="IPR018510">
    <property type="entry name" value="DAP_epimerase_AS"/>
</dbReference>
<dbReference type="InterPro" id="IPR001653">
    <property type="entry name" value="DAP_epimerase_DapF"/>
</dbReference>
<dbReference type="NCBIfam" id="TIGR00652">
    <property type="entry name" value="DapF"/>
    <property type="match status" value="1"/>
</dbReference>
<dbReference type="PANTHER" id="PTHR31689:SF0">
    <property type="entry name" value="DIAMINOPIMELATE EPIMERASE"/>
    <property type="match status" value="1"/>
</dbReference>
<dbReference type="PANTHER" id="PTHR31689">
    <property type="entry name" value="DIAMINOPIMELATE EPIMERASE, CHLOROPLASTIC"/>
    <property type="match status" value="1"/>
</dbReference>
<dbReference type="Pfam" id="PF01678">
    <property type="entry name" value="DAP_epimerase"/>
    <property type="match status" value="2"/>
</dbReference>
<dbReference type="SUPFAM" id="SSF54506">
    <property type="entry name" value="Diaminopimelate epimerase-like"/>
    <property type="match status" value="2"/>
</dbReference>
<dbReference type="PROSITE" id="PS01326">
    <property type="entry name" value="DAP_EPIMERASE"/>
    <property type="match status" value="1"/>
</dbReference>
<comment type="function">
    <text evidence="1">Catalyzes the stereoinversion of LL-2,6-diaminopimelate (L,L-DAP) to meso-diaminopimelate (meso-DAP), a precursor of L-lysine and an essential component of the bacterial peptidoglycan.</text>
</comment>
<comment type="catalytic activity">
    <reaction evidence="1">
        <text>(2S,6S)-2,6-diaminopimelate = meso-2,6-diaminopimelate</text>
        <dbReference type="Rhea" id="RHEA:15393"/>
        <dbReference type="ChEBI" id="CHEBI:57609"/>
        <dbReference type="ChEBI" id="CHEBI:57791"/>
        <dbReference type="EC" id="5.1.1.7"/>
    </reaction>
</comment>
<comment type="pathway">
    <text evidence="1">Amino-acid biosynthesis; L-lysine biosynthesis via DAP pathway; DL-2,6-diaminopimelate from LL-2,6-diaminopimelate: step 1/1.</text>
</comment>
<comment type="subunit">
    <text evidence="1">Homodimer.</text>
</comment>
<comment type="subcellular location">
    <subcellularLocation>
        <location evidence="1">Cytoplasm</location>
    </subcellularLocation>
</comment>
<comment type="similarity">
    <text evidence="1">Belongs to the diaminopimelate epimerase family.</text>
</comment>